<organism>
    <name type="scientific">Bos taurus</name>
    <name type="common">Bovine</name>
    <dbReference type="NCBI Taxonomy" id="9913"/>
    <lineage>
        <taxon>Eukaryota</taxon>
        <taxon>Metazoa</taxon>
        <taxon>Chordata</taxon>
        <taxon>Craniata</taxon>
        <taxon>Vertebrata</taxon>
        <taxon>Euteleostomi</taxon>
        <taxon>Mammalia</taxon>
        <taxon>Eutheria</taxon>
        <taxon>Laurasiatheria</taxon>
        <taxon>Artiodactyla</taxon>
        <taxon>Ruminantia</taxon>
        <taxon>Pecora</taxon>
        <taxon>Bovidae</taxon>
        <taxon>Bovinae</taxon>
        <taxon>Bos</taxon>
    </lineage>
</organism>
<protein>
    <recommendedName>
        <fullName>Golgi phosphoprotein 3-like</fullName>
    </recommendedName>
</protein>
<feature type="chain" id="PRO_0000324136" description="Golgi phosphoprotein 3-like">
    <location>
        <begin position="1"/>
        <end position="285"/>
    </location>
</feature>
<feature type="region of interest" description="Disordered" evidence="3">
    <location>
        <begin position="1"/>
        <end position="39"/>
    </location>
</feature>
<feature type="region of interest" description="Beta-hairpin required for oligomerization" evidence="1">
    <location>
        <begin position="176"/>
        <end position="187"/>
    </location>
</feature>
<feature type="compositionally biased region" description="Basic and acidic residues" evidence="3">
    <location>
        <begin position="10"/>
        <end position="23"/>
    </location>
</feature>
<feature type="binding site" evidence="1">
    <location>
        <position position="67"/>
    </location>
    <ligand>
        <name>a 1,2-diacyl-sn-glycero-3-phospho-(1D-myo-inositol 4-phosphate)</name>
        <dbReference type="ChEBI" id="CHEBI:58178"/>
    </ligand>
</feature>
<feature type="binding site" evidence="1">
    <location>
        <position position="76"/>
    </location>
    <ligand>
        <name>a 1,2-diacyl-sn-glycero-3-phospho-(1D-myo-inositol 4-phosphate)</name>
        <dbReference type="ChEBI" id="CHEBI:58178"/>
    </ligand>
</feature>
<feature type="binding site" evidence="1">
    <location>
        <position position="157"/>
    </location>
    <ligand>
        <name>a 1,2-diacyl-sn-glycero-3-phospho-(1D-myo-inositol 4-phosphate)</name>
        <dbReference type="ChEBI" id="CHEBI:58178"/>
    </ligand>
</feature>
<feature type="binding site" evidence="1">
    <location>
        <position position="160"/>
    </location>
    <ligand>
        <name>a 1,2-diacyl-sn-glycero-3-phospho-(1D-myo-inositol 4-phosphate)</name>
        <dbReference type="ChEBI" id="CHEBI:58178"/>
    </ligand>
</feature>
<feature type="modified residue" description="Phosphoserine" evidence="2">
    <location>
        <position position="112"/>
    </location>
</feature>
<name>GLP3L_BOVIN</name>
<reference key="1">
    <citation type="submission" date="2007-06" db="EMBL/GenBank/DDBJ databases">
        <authorList>
            <consortium name="NIH - Mammalian Gene Collection (MGC) project"/>
        </authorList>
    </citation>
    <scope>NUCLEOTIDE SEQUENCE [LARGE SCALE MRNA]</scope>
    <source>
        <strain>Hereford</strain>
        <tissue>Ascending colon</tissue>
    </source>
</reference>
<comment type="function">
    <text evidence="1">Phosphatidylinositol-4-phosphate-binding protein that may antagonize the action of GOLPH3 which is required for the process of vesicle budding at the Golgi and anterograde transport to the plasma membrane.</text>
</comment>
<comment type="subunit">
    <text evidence="1">Homooligomer. Does not interact MYO18; differs from GOLPH3 by its inability to interact with MYO18. May interact with ARF1 (By similarity).</text>
</comment>
<comment type="subcellular location">
    <subcellularLocation>
        <location evidence="1">Golgi apparatus</location>
        <location evidence="1">Golgi stack membrane</location>
        <topology evidence="1">Peripheral membrane protein</topology>
        <orientation evidence="1">Cytoplasmic side</orientation>
    </subcellularLocation>
    <subcellularLocation>
        <location evidence="1">Golgi apparatus</location>
        <location evidence="1">trans-Golgi network membrane</location>
        <topology evidence="1">Peripheral membrane protein</topology>
        <orientation evidence="1">Cytoplasmic side</orientation>
    </subcellularLocation>
    <text evidence="1">Phosphatidylinositol 4-phosphate (PtdIns4P)-binding mediates recruitment to Golgi membranes.</text>
</comment>
<comment type="similarity">
    <text evidence="4">Belongs to the GOLPH3/VPS74 family.</text>
</comment>
<evidence type="ECO:0000250" key="1"/>
<evidence type="ECO:0000250" key="2">
    <source>
        <dbReference type="UniProtKB" id="Q9H4A5"/>
    </source>
</evidence>
<evidence type="ECO:0000256" key="3">
    <source>
        <dbReference type="SAM" id="MobiDB-lite"/>
    </source>
</evidence>
<evidence type="ECO:0000305" key="4"/>
<proteinExistence type="evidence at transcript level"/>
<dbReference type="EMBL" id="BC146227">
    <property type="protein sequence ID" value="AAI46228.1"/>
    <property type="molecule type" value="mRNA"/>
</dbReference>
<dbReference type="RefSeq" id="NP_001092522.1">
    <property type="nucleotide sequence ID" value="NM_001099052.1"/>
</dbReference>
<dbReference type="RefSeq" id="XP_005203965.1">
    <property type="nucleotide sequence ID" value="XM_005203908.5"/>
</dbReference>
<dbReference type="RefSeq" id="XP_015318243.1">
    <property type="nucleotide sequence ID" value="XM_015462757.1"/>
</dbReference>
<dbReference type="SMR" id="A6H7F6"/>
<dbReference type="FunCoup" id="A6H7F6">
    <property type="interactions" value="1142"/>
</dbReference>
<dbReference type="STRING" id="9913.ENSBTAP00000027131"/>
<dbReference type="PaxDb" id="9913-ENSBTAP00000027131"/>
<dbReference type="GeneID" id="532555"/>
<dbReference type="KEGG" id="bta:532555"/>
<dbReference type="CTD" id="55204"/>
<dbReference type="VEuPathDB" id="HostDB:ENSBTAG00000020357"/>
<dbReference type="eggNOG" id="KOG3983">
    <property type="taxonomic scope" value="Eukaryota"/>
</dbReference>
<dbReference type="HOGENOM" id="CLU_036311_0_0_1"/>
<dbReference type="InParanoid" id="A6H7F6"/>
<dbReference type="OMA" id="KEXGYTS"/>
<dbReference type="OrthoDB" id="2189106at2759"/>
<dbReference type="TreeFam" id="TF314360"/>
<dbReference type="Proteomes" id="UP000009136">
    <property type="component" value="Chromosome 3"/>
</dbReference>
<dbReference type="Bgee" id="ENSBTAG00000020357">
    <property type="expression patterns" value="Expressed in oviduct epithelium and 107 other cell types or tissues"/>
</dbReference>
<dbReference type="GO" id="GO:0005829">
    <property type="term" value="C:cytosol"/>
    <property type="evidence" value="ECO:0000318"/>
    <property type="project" value="GO_Central"/>
</dbReference>
<dbReference type="GO" id="GO:0031985">
    <property type="term" value="C:Golgi cisterna"/>
    <property type="evidence" value="ECO:0000250"/>
    <property type="project" value="UniProtKB"/>
</dbReference>
<dbReference type="GO" id="GO:0032580">
    <property type="term" value="C:Golgi cisterna membrane"/>
    <property type="evidence" value="ECO:0007669"/>
    <property type="project" value="UniProtKB-SubCell"/>
</dbReference>
<dbReference type="GO" id="GO:0000139">
    <property type="term" value="C:Golgi membrane"/>
    <property type="evidence" value="ECO:0007669"/>
    <property type="project" value="GOC"/>
</dbReference>
<dbReference type="GO" id="GO:0005802">
    <property type="term" value="C:trans-Golgi network"/>
    <property type="evidence" value="ECO:0000250"/>
    <property type="project" value="UniProtKB"/>
</dbReference>
<dbReference type="GO" id="GO:0140312">
    <property type="term" value="F:cargo adaptor activity"/>
    <property type="evidence" value="ECO:0007669"/>
    <property type="project" value="Ensembl"/>
</dbReference>
<dbReference type="GO" id="GO:0070273">
    <property type="term" value="F:phosphatidylinositol-4-phosphate binding"/>
    <property type="evidence" value="ECO:0000250"/>
    <property type="project" value="UniProtKB"/>
</dbReference>
<dbReference type="GO" id="GO:0007030">
    <property type="term" value="P:Golgi organization"/>
    <property type="evidence" value="ECO:0000250"/>
    <property type="project" value="UniProtKB"/>
</dbReference>
<dbReference type="GO" id="GO:0043001">
    <property type="term" value="P:Golgi to plasma membrane protein transport"/>
    <property type="evidence" value="ECO:0000318"/>
    <property type="project" value="GO_Central"/>
</dbReference>
<dbReference type="GO" id="GO:0048194">
    <property type="term" value="P:Golgi vesicle budding"/>
    <property type="evidence" value="ECO:0000318"/>
    <property type="project" value="GO_Central"/>
</dbReference>
<dbReference type="GO" id="GO:0050714">
    <property type="term" value="P:positive regulation of protein secretion"/>
    <property type="evidence" value="ECO:0000250"/>
    <property type="project" value="UniProtKB"/>
</dbReference>
<dbReference type="GO" id="GO:0140450">
    <property type="term" value="P:protein targeting to Golgi apparatus"/>
    <property type="evidence" value="ECO:0007669"/>
    <property type="project" value="Ensembl"/>
</dbReference>
<dbReference type="GO" id="GO:0006890">
    <property type="term" value="P:retrograde vesicle-mediated transport, Golgi to endoplasmic reticulum"/>
    <property type="evidence" value="ECO:0000318"/>
    <property type="project" value="GO_Central"/>
</dbReference>
<dbReference type="FunFam" id="1.10.3630.10:FF:000001">
    <property type="entry name" value="Golgi phosphoprotein 3"/>
    <property type="match status" value="1"/>
</dbReference>
<dbReference type="Gene3D" id="1.10.3630.10">
    <property type="entry name" value="yeast vps74-n-term truncation variant domain like"/>
    <property type="match status" value="1"/>
</dbReference>
<dbReference type="InterPro" id="IPR008628">
    <property type="entry name" value="GPP34-like"/>
</dbReference>
<dbReference type="InterPro" id="IPR038261">
    <property type="entry name" value="GPP34-like_sf"/>
</dbReference>
<dbReference type="PANTHER" id="PTHR12704:SF4">
    <property type="entry name" value="GOLGI PHOSPHOPROTEIN 3-LIKE"/>
    <property type="match status" value="1"/>
</dbReference>
<dbReference type="PANTHER" id="PTHR12704">
    <property type="entry name" value="TRANS-GOLGI PROTEIN GMX33"/>
    <property type="match status" value="1"/>
</dbReference>
<dbReference type="Pfam" id="PF05719">
    <property type="entry name" value="GPP34"/>
    <property type="match status" value="1"/>
</dbReference>
<sequence length="285" mass="32814">MTTLTHRARRTEVGKNSEKKVESEENVNQDRNQDNEDIGDSKDIRLTLMEEVLLLGLKDKEGYTSFWNDCISSGLRGGILIELAMRGRIYLEPPTMRKKRLLDRKVLLKSDSPTGDVLLDETLKHIKATEPTETVQTWIELLTGETWNPFKLQYQLRNVRERIAKNLVEKGILTTEKQNFLLFDMTTHPVTNTTEKQRLVKKLQDSVLERWVNDPQRMDKRTLALLVLAHSSDVLENVFSSLTDDKYDMAMNRAKDLVELDPEVEGTKHSATEMIWAVLAAFNKS</sequence>
<accession>A6H7F6</accession>
<keyword id="KW-0333">Golgi apparatus</keyword>
<keyword id="KW-0446">Lipid-binding</keyword>
<keyword id="KW-0472">Membrane</keyword>
<keyword id="KW-0597">Phosphoprotein</keyword>
<keyword id="KW-1185">Reference proteome</keyword>
<gene>
    <name type="primary">GOLPH3L</name>
</gene>